<name>CSHA_STAAW</name>
<accession>Q7A0D2</accession>
<sequence>MQNFKELGISDNTVQSLESMGFKEPTPIQKDSIPYALQGIDILGQAQTGTGKTGAFGIPLIEKVVGKQGVQSLILAPTRELAMQVAEQLREFSRGQGVQVVTVFGGMPIERQIKALKKGPQIVVGTPGRVIDHLNRRTLKTDGIHTLILDEADEMMNMGFIDDMRFIMDKIPAVQRQTMLFSATMPKAIQALVQQFMKSPKIIKTMNNEMSDPQIEEFYTIVKELEKFDTFTNFLDVHQPELAIVFGRTKRRVDELTSALISKGYKAEGLHGDITQAKRLEVLKKFKNDQINILVATDVAARGLDISGVSHVYNFDIPQDTESYTHRIGRTGRAGKEGIAVTFVNPIEMDYIRQIEDANGRKMSALRPPHRKEVLQAREDDIKEKVENWMSKESESRLKRISTELLNEYNDVDLVAALLQELVEANDEVEVQLTFEKPLSRKGRNGKPSGSRNRNSKRGNPKFDSKSKRSKGYSSKKKSTKKFDRKEKSSGGSRPMKGRTFADHQK</sequence>
<keyword id="KW-0067">ATP-binding</keyword>
<keyword id="KW-0963">Cytoplasm</keyword>
<keyword id="KW-0347">Helicase</keyword>
<keyword id="KW-0378">Hydrolase</keyword>
<keyword id="KW-0547">Nucleotide-binding</keyword>
<keyword id="KW-0694">RNA-binding</keyword>
<keyword id="KW-0346">Stress response</keyword>
<dbReference type="EC" id="3.6.4.13" evidence="1"/>
<dbReference type="EMBL" id="BA000033">
    <property type="protein sequence ID" value="BAB95869.1"/>
    <property type="molecule type" value="Genomic_DNA"/>
</dbReference>
<dbReference type="RefSeq" id="WP_001178942.1">
    <property type="nucleotide sequence ID" value="NC_003923.1"/>
</dbReference>
<dbReference type="SMR" id="Q7A0D2"/>
<dbReference type="KEGG" id="sam:MW2004"/>
<dbReference type="HOGENOM" id="CLU_003041_21_1_9"/>
<dbReference type="GO" id="GO:0005829">
    <property type="term" value="C:cytosol"/>
    <property type="evidence" value="ECO:0007669"/>
    <property type="project" value="TreeGrafter"/>
</dbReference>
<dbReference type="GO" id="GO:0005840">
    <property type="term" value="C:ribosome"/>
    <property type="evidence" value="ECO:0007669"/>
    <property type="project" value="TreeGrafter"/>
</dbReference>
<dbReference type="GO" id="GO:0005524">
    <property type="term" value="F:ATP binding"/>
    <property type="evidence" value="ECO:0007669"/>
    <property type="project" value="UniProtKB-UniRule"/>
</dbReference>
<dbReference type="GO" id="GO:0016887">
    <property type="term" value="F:ATP hydrolysis activity"/>
    <property type="evidence" value="ECO:0007669"/>
    <property type="project" value="RHEA"/>
</dbReference>
<dbReference type="GO" id="GO:0003724">
    <property type="term" value="F:RNA helicase activity"/>
    <property type="evidence" value="ECO:0007669"/>
    <property type="project" value="UniProtKB-UniRule"/>
</dbReference>
<dbReference type="GO" id="GO:0033592">
    <property type="term" value="F:RNA strand annealing activity"/>
    <property type="evidence" value="ECO:0007669"/>
    <property type="project" value="TreeGrafter"/>
</dbReference>
<dbReference type="GO" id="GO:0009409">
    <property type="term" value="P:response to cold"/>
    <property type="evidence" value="ECO:0007669"/>
    <property type="project" value="TreeGrafter"/>
</dbReference>
<dbReference type="GO" id="GO:0006401">
    <property type="term" value="P:RNA catabolic process"/>
    <property type="evidence" value="ECO:0007669"/>
    <property type="project" value="UniProtKB-UniRule"/>
</dbReference>
<dbReference type="CDD" id="cd00268">
    <property type="entry name" value="DEADc"/>
    <property type="match status" value="1"/>
</dbReference>
<dbReference type="CDD" id="cd18787">
    <property type="entry name" value="SF2_C_DEAD"/>
    <property type="match status" value="1"/>
</dbReference>
<dbReference type="FunFam" id="3.40.50.300:FF:000108">
    <property type="entry name" value="ATP-dependent RNA helicase RhlE"/>
    <property type="match status" value="1"/>
</dbReference>
<dbReference type="Gene3D" id="3.40.50.300">
    <property type="entry name" value="P-loop containing nucleotide triphosphate hydrolases"/>
    <property type="match status" value="2"/>
</dbReference>
<dbReference type="HAMAP" id="MF_01493">
    <property type="entry name" value="DEAD_helicase_CshA"/>
    <property type="match status" value="1"/>
</dbReference>
<dbReference type="InterPro" id="IPR011545">
    <property type="entry name" value="DEAD/DEAH_box_helicase_dom"/>
</dbReference>
<dbReference type="InterPro" id="IPR050547">
    <property type="entry name" value="DEAD_box_RNA_helicases"/>
</dbReference>
<dbReference type="InterPro" id="IPR030880">
    <property type="entry name" value="DEAD_helicase_CshA"/>
</dbReference>
<dbReference type="InterPro" id="IPR014001">
    <property type="entry name" value="Helicase_ATP-bd"/>
</dbReference>
<dbReference type="InterPro" id="IPR001650">
    <property type="entry name" value="Helicase_C-like"/>
</dbReference>
<dbReference type="InterPro" id="IPR027417">
    <property type="entry name" value="P-loop_NTPase"/>
</dbReference>
<dbReference type="InterPro" id="IPR000629">
    <property type="entry name" value="RNA-helicase_DEAD-box_CS"/>
</dbReference>
<dbReference type="InterPro" id="IPR014014">
    <property type="entry name" value="RNA_helicase_DEAD_Q_motif"/>
</dbReference>
<dbReference type="PANTHER" id="PTHR47963">
    <property type="entry name" value="DEAD-BOX ATP-DEPENDENT RNA HELICASE 47, MITOCHONDRIAL"/>
    <property type="match status" value="1"/>
</dbReference>
<dbReference type="PANTHER" id="PTHR47963:SF5">
    <property type="entry name" value="DEAD-BOX ATP-DEPENDENT RNA HELICASE CSHA"/>
    <property type="match status" value="1"/>
</dbReference>
<dbReference type="Pfam" id="PF00270">
    <property type="entry name" value="DEAD"/>
    <property type="match status" value="1"/>
</dbReference>
<dbReference type="Pfam" id="PF00271">
    <property type="entry name" value="Helicase_C"/>
    <property type="match status" value="1"/>
</dbReference>
<dbReference type="SMART" id="SM00487">
    <property type="entry name" value="DEXDc"/>
    <property type="match status" value="1"/>
</dbReference>
<dbReference type="SMART" id="SM00490">
    <property type="entry name" value="HELICc"/>
    <property type="match status" value="1"/>
</dbReference>
<dbReference type="SUPFAM" id="SSF52540">
    <property type="entry name" value="P-loop containing nucleoside triphosphate hydrolases"/>
    <property type="match status" value="1"/>
</dbReference>
<dbReference type="PROSITE" id="PS00039">
    <property type="entry name" value="DEAD_ATP_HELICASE"/>
    <property type="match status" value="1"/>
</dbReference>
<dbReference type="PROSITE" id="PS51192">
    <property type="entry name" value="HELICASE_ATP_BIND_1"/>
    <property type="match status" value="1"/>
</dbReference>
<dbReference type="PROSITE" id="PS51194">
    <property type="entry name" value="HELICASE_CTER"/>
    <property type="match status" value="1"/>
</dbReference>
<dbReference type="PROSITE" id="PS51195">
    <property type="entry name" value="Q_MOTIF"/>
    <property type="match status" value="1"/>
</dbReference>
<organism>
    <name type="scientific">Staphylococcus aureus (strain MW2)</name>
    <dbReference type="NCBI Taxonomy" id="196620"/>
    <lineage>
        <taxon>Bacteria</taxon>
        <taxon>Bacillati</taxon>
        <taxon>Bacillota</taxon>
        <taxon>Bacilli</taxon>
        <taxon>Bacillales</taxon>
        <taxon>Staphylococcaceae</taxon>
        <taxon>Staphylococcus</taxon>
    </lineage>
</organism>
<protein>
    <recommendedName>
        <fullName evidence="1">DEAD-box ATP-dependent RNA helicase CshA</fullName>
        <ecNumber evidence="1">3.6.4.13</ecNumber>
    </recommendedName>
</protein>
<feature type="chain" id="PRO_0000284823" description="DEAD-box ATP-dependent RNA helicase CshA">
    <location>
        <begin position="1"/>
        <end position="506"/>
    </location>
</feature>
<feature type="domain" description="Helicase ATP-binding" evidence="1">
    <location>
        <begin position="33"/>
        <end position="203"/>
    </location>
</feature>
<feature type="domain" description="Helicase C-terminal" evidence="1">
    <location>
        <begin position="214"/>
        <end position="375"/>
    </location>
</feature>
<feature type="region of interest" description="Disordered" evidence="2">
    <location>
        <begin position="436"/>
        <end position="506"/>
    </location>
</feature>
<feature type="short sequence motif" description="Q motif">
    <location>
        <begin position="2"/>
        <end position="30"/>
    </location>
</feature>
<feature type="short sequence motif" description="DEAD box">
    <location>
        <begin position="150"/>
        <end position="153"/>
    </location>
</feature>
<feature type="compositionally biased region" description="Basic residues" evidence="2">
    <location>
        <begin position="468"/>
        <end position="480"/>
    </location>
</feature>
<feature type="binding site" evidence="1">
    <location>
        <begin position="46"/>
        <end position="53"/>
    </location>
    <ligand>
        <name>ATP</name>
        <dbReference type="ChEBI" id="CHEBI:30616"/>
    </ligand>
</feature>
<proteinExistence type="inferred from homology"/>
<gene>
    <name evidence="1" type="primary">cshA</name>
    <name type="ordered locus">MW2004</name>
</gene>
<evidence type="ECO:0000255" key="1">
    <source>
        <dbReference type="HAMAP-Rule" id="MF_01493"/>
    </source>
</evidence>
<evidence type="ECO:0000256" key="2">
    <source>
        <dbReference type="SAM" id="MobiDB-lite"/>
    </source>
</evidence>
<reference key="1">
    <citation type="journal article" date="2002" name="Lancet">
        <title>Genome and virulence determinants of high virulence community-acquired MRSA.</title>
        <authorList>
            <person name="Baba T."/>
            <person name="Takeuchi F."/>
            <person name="Kuroda M."/>
            <person name="Yuzawa H."/>
            <person name="Aoki K."/>
            <person name="Oguchi A."/>
            <person name="Nagai Y."/>
            <person name="Iwama N."/>
            <person name="Asano K."/>
            <person name="Naimi T."/>
            <person name="Kuroda H."/>
            <person name="Cui L."/>
            <person name="Yamamoto K."/>
            <person name="Hiramatsu K."/>
        </authorList>
    </citation>
    <scope>NUCLEOTIDE SEQUENCE [LARGE SCALE GENOMIC DNA]</scope>
    <source>
        <strain>MW2</strain>
    </source>
</reference>
<comment type="function">
    <text evidence="1">DEAD-box RNA helicase possibly involved in RNA degradation. Unwinds dsRNA in both 5'- and 3'-directions, has RNA-dependent ATPase activity.</text>
</comment>
<comment type="catalytic activity">
    <reaction evidence="1">
        <text>ATP + H2O = ADP + phosphate + H(+)</text>
        <dbReference type="Rhea" id="RHEA:13065"/>
        <dbReference type="ChEBI" id="CHEBI:15377"/>
        <dbReference type="ChEBI" id="CHEBI:15378"/>
        <dbReference type="ChEBI" id="CHEBI:30616"/>
        <dbReference type="ChEBI" id="CHEBI:43474"/>
        <dbReference type="ChEBI" id="CHEBI:456216"/>
        <dbReference type="EC" id="3.6.4.13"/>
    </reaction>
</comment>
<comment type="subunit">
    <text evidence="1">Oligomerizes, may be a member of the RNA degradosome.</text>
</comment>
<comment type="subcellular location">
    <subcellularLocation>
        <location evidence="1">Cytoplasm</location>
    </subcellularLocation>
</comment>
<comment type="similarity">
    <text evidence="1">Belongs to the DEAD box helicase family. CshA subfamily.</text>
</comment>